<dbReference type="EMBL" id="CP000720">
    <property type="protein sequence ID" value="ABS47531.1"/>
    <property type="molecule type" value="Genomic_DNA"/>
</dbReference>
<dbReference type="RefSeq" id="WP_002208926.1">
    <property type="nucleotide sequence ID" value="NC_009708.1"/>
</dbReference>
<dbReference type="SMR" id="A7FNW4"/>
<dbReference type="GeneID" id="57974475"/>
<dbReference type="KEGG" id="ypi:YpsIP31758_3994"/>
<dbReference type="HOGENOM" id="CLU_006325_3_0_6"/>
<dbReference type="Proteomes" id="UP000002412">
    <property type="component" value="Chromosome"/>
</dbReference>
<dbReference type="GO" id="GO:0005524">
    <property type="term" value="F:ATP binding"/>
    <property type="evidence" value="ECO:0007669"/>
    <property type="project" value="UniProtKB-UniRule"/>
</dbReference>
<dbReference type="GO" id="GO:0003677">
    <property type="term" value="F:DNA binding"/>
    <property type="evidence" value="ECO:0007669"/>
    <property type="project" value="UniProtKB-KW"/>
</dbReference>
<dbReference type="GO" id="GO:0003700">
    <property type="term" value="F:DNA-binding transcription factor activity"/>
    <property type="evidence" value="ECO:0007669"/>
    <property type="project" value="UniProtKB-UniRule"/>
</dbReference>
<dbReference type="GO" id="GO:0045913">
    <property type="term" value="P:positive regulation of carbohydrate metabolic process"/>
    <property type="evidence" value="ECO:0007669"/>
    <property type="project" value="UniProtKB-UniRule"/>
</dbReference>
<dbReference type="GO" id="GO:0045893">
    <property type="term" value="P:positive regulation of DNA-templated transcription"/>
    <property type="evidence" value="ECO:0007669"/>
    <property type="project" value="UniProtKB-UniRule"/>
</dbReference>
<dbReference type="CDD" id="cd06170">
    <property type="entry name" value="LuxR_C_like"/>
    <property type="match status" value="1"/>
</dbReference>
<dbReference type="FunFam" id="1.10.10.10:FF:000115">
    <property type="entry name" value="HTH-type transcriptional regulator MalT"/>
    <property type="match status" value="1"/>
</dbReference>
<dbReference type="Gene3D" id="1.25.40.10">
    <property type="entry name" value="Tetratricopeptide repeat domain"/>
    <property type="match status" value="1"/>
</dbReference>
<dbReference type="Gene3D" id="1.10.10.10">
    <property type="entry name" value="Winged helix-like DNA-binding domain superfamily/Winged helix DNA-binding domain"/>
    <property type="match status" value="1"/>
</dbReference>
<dbReference type="HAMAP" id="MF_01247">
    <property type="entry name" value="HTH_type_MalT"/>
    <property type="match status" value="1"/>
</dbReference>
<dbReference type="InterPro" id="IPR027417">
    <property type="entry name" value="P-loop_NTPase"/>
</dbReference>
<dbReference type="InterPro" id="IPR016032">
    <property type="entry name" value="Sig_transdc_resp-reg_C-effctor"/>
</dbReference>
<dbReference type="InterPro" id="IPR011990">
    <property type="entry name" value="TPR-like_helical_dom_sf"/>
</dbReference>
<dbReference type="InterPro" id="IPR041617">
    <property type="entry name" value="TPR_MalT"/>
</dbReference>
<dbReference type="InterPro" id="IPR023768">
    <property type="entry name" value="Tscrpt_reg_HTH_MalT"/>
</dbReference>
<dbReference type="InterPro" id="IPR000792">
    <property type="entry name" value="Tscrpt_reg_LuxR_C"/>
</dbReference>
<dbReference type="InterPro" id="IPR036388">
    <property type="entry name" value="WH-like_DNA-bd_sf"/>
</dbReference>
<dbReference type="NCBIfam" id="NF003420">
    <property type="entry name" value="PRK04841.1"/>
    <property type="match status" value="1"/>
</dbReference>
<dbReference type="PANTHER" id="PTHR44688">
    <property type="entry name" value="DNA-BINDING TRANSCRIPTIONAL ACTIVATOR DEVR_DOSR"/>
    <property type="match status" value="1"/>
</dbReference>
<dbReference type="PANTHER" id="PTHR44688:SF16">
    <property type="entry name" value="DNA-BINDING TRANSCRIPTIONAL ACTIVATOR DEVR_DOSR"/>
    <property type="match status" value="1"/>
</dbReference>
<dbReference type="Pfam" id="PF00196">
    <property type="entry name" value="GerE"/>
    <property type="match status" value="1"/>
</dbReference>
<dbReference type="Pfam" id="PF17874">
    <property type="entry name" value="TPR_MalT"/>
    <property type="match status" value="1"/>
</dbReference>
<dbReference type="PRINTS" id="PR00038">
    <property type="entry name" value="HTHLUXR"/>
</dbReference>
<dbReference type="SMART" id="SM00421">
    <property type="entry name" value="HTH_LUXR"/>
    <property type="match status" value="1"/>
</dbReference>
<dbReference type="SUPFAM" id="SSF46894">
    <property type="entry name" value="C-terminal effector domain of the bipartite response regulators"/>
    <property type="match status" value="1"/>
</dbReference>
<dbReference type="SUPFAM" id="SSF52540">
    <property type="entry name" value="P-loop containing nucleoside triphosphate hydrolases"/>
    <property type="match status" value="1"/>
</dbReference>
<dbReference type="SUPFAM" id="SSF48452">
    <property type="entry name" value="TPR-like"/>
    <property type="match status" value="1"/>
</dbReference>
<dbReference type="PROSITE" id="PS00622">
    <property type="entry name" value="HTH_LUXR_1"/>
    <property type="match status" value="1"/>
</dbReference>
<dbReference type="PROSITE" id="PS50043">
    <property type="entry name" value="HTH_LUXR_2"/>
    <property type="match status" value="1"/>
</dbReference>
<comment type="function">
    <text evidence="1">Positively regulates the transcription of the maltose regulon whose gene products are responsible for uptake and catabolism of malto-oligosaccharides. Specifically binds to the promoter region of its target genes, recognizing a short DNA motif called the MalT box.</text>
</comment>
<comment type="activity regulation">
    <text evidence="1">Activated by ATP and maltotriose, which are both required for DNA binding.</text>
</comment>
<comment type="subunit">
    <text evidence="1">Monomer in solution. Oligomerizes to an active state in the presence of the positive effectors ATP and maltotriose.</text>
</comment>
<comment type="similarity">
    <text evidence="1">Belongs to the MalT family.</text>
</comment>
<keyword id="KW-0010">Activator</keyword>
<keyword id="KW-0067">ATP-binding</keyword>
<keyword id="KW-0119">Carbohydrate metabolism</keyword>
<keyword id="KW-0238">DNA-binding</keyword>
<keyword id="KW-0547">Nucleotide-binding</keyword>
<keyword id="KW-0804">Transcription</keyword>
<keyword id="KW-0805">Transcription regulation</keyword>
<gene>
    <name evidence="1" type="primary">malT</name>
    <name type="ordered locus">YpsIP31758_3994</name>
</gene>
<evidence type="ECO:0000255" key="1">
    <source>
        <dbReference type="HAMAP-Rule" id="MF_01247"/>
    </source>
</evidence>
<accession>A7FNW4</accession>
<organism>
    <name type="scientific">Yersinia pseudotuberculosis serotype O:1b (strain IP 31758)</name>
    <dbReference type="NCBI Taxonomy" id="349747"/>
    <lineage>
        <taxon>Bacteria</taxon>
        <taxon>Pseudomonadati</taxon>
        <taxon>Pseudomonadota</taxon>
        <taxon>Gammaproteobacteria</taxon>
        <taxon>Enterobacterales</taxon>
        <taxon>Yersiniaceae</taxon>
        <taxon>Yersinia</taxon>
    </lineage>
</organism>
<feature type="chain" id="PRO_1000085784" description="HTH-type transcriptional regulator MalT">
    <location>
        <begin position="1"/>
        <end position="903"/>
    </location>
</feature>
<feature type="domain" description="HTH luxR-type" evidence="1">
    <location>
        <begin position="832"/>
        <end position="897"/>
    </location>
</feature>
<feature type="DNA-binding region" description="H-T-H motif" evidence="1">
    <location>
        <begin position="856"/>
        <end position="875"/>
    </location>
</feature>
<feature type="binding site" evidence="1">
    <location>
        <begin position="39"/>
        <end position="46"/>
    </location>
    <ligand>
        <name>ATP</name>
        <dbReference type="ChEBI" id="CHEBI:30616"/>
    </ligand>
</feature>
<proteinExistence type="inferred from homology"/>
<name>MALT_YERP3</name>
<reference key="1">
    <citation type="journal article" date="2007" name="PLoS Genet.">
        <title>The complete genome sequence of Yersinia pseudotuberculosis IP31758, the causative agent of Far East scarlet-like fever.</title>
        <authorList>
            <person name="Eppinger M."/>
            <person name="Rosovitz M.J."/>
            <person name="Fricke W.F."/>
            <person name="Rasko D.A."/>
            <person name="Kokorina G."/>
            <person name="Fayolle C."/>
            <person name="Lindler L.E."/>
            <person name="Carniel E."/>
            <person name="Ravel J."/>
        </authorList>
    </citation>
    <scope>NUCLEOTIDE SEQUENCE [LARGE SCALE GENOMIC DNA]</scope>
    <source>
        <strain>IP 31758</strain>
    </source>
</reference>
<sequence length="903" mass="103165">MLIPSKLSRPVRLQNTVVRDRLLVKLSSAANYRLTLINCPAGYGKTTLIAQWAADQSNLGWYSLDESDNQSERFATYLIAAIQLATGGHCSKSEALSQKHQYANLSALFSQLFIELSNWDGPLYLVIDDYHLITNDAIHEAMRFFLRHQPENLTLIILSRTLPSLGIANLRVRDQLLELGMQQLAFNHHEAQQFFECRLSSPLEQGDSSRLCDEVEGWVTALQLIALSSRQPNSSAQKSAKRLAGLNASHLSDYLVDEVLDQVDSKARAFLLRCSVLRSMNDALIVRLTGEDNGQQLLEELERQGLFIHRMDDSAEWFCFHPLFATFLRQRCQWELALELPELHHAAAEGWMALGYPAEAIHHALAAGDVGMLRDILLQHAWSLFHHSELALLEQCLTALPYPLLVQNPELALLQAWLAQSQHRYSEVNTLLEQAELAMQERKIPVDEILRAEFGALRAQVAINAGKPDEAEKLATDALKYLPMAHYYSRIVATSVTGEVHHCKGELARALPMMQQTEQMARRHEAYHYALWALLQQSEILIAQGFLQAAYETQEKAFELIREQHLEQLPMHEFLLRIRSQVLWSWSRLDEAEEAARKGVEILANYQPQQQLQCLAMLAKCSLARGDLDNANVYIQRCEALQHGSQYHLDWITNADKPRVIHWQMTGDKVAAASWLRQTEKPGMADNHFLQGQWRNIARVQIILGRFDEAEVVLDELNENARRLRLTSDLNRNLLLSNTLYWQTERKGEAQKALIESLTLANRTGFISHFVIEGEAMAQQLRQLIQLNALPELEQHRAQRILKDINQHHRHKFAHFDEIFVDKLLTHPQVPELIRTSPLTQREWQVLGLIYSGYSNDQIANELDVAATTIKTHIRNLYQKLGVAHRQEAVQQAQRLLQMMGYV</sequence>
<protein>
    <recommendedName>
        <fullName evidence="1">HTH-type transcriptional regulator MalT</fullName>
    </recommendedName>
    <alternativeName>
        <fullName evidence="1">ATP-dependent transcriptional activator MalT</fullName>
    </alternativeName>
</protein>